<proteinExistence type="evidence at protein level"/>
<reference key="1">
    <citation type="journal article" date="2000" name="J. Biol. Chem.">
        <title>Fibrillarin genes encode both a conserved nucleolar protein and a novel small nucleolar RNA involved in ribosomal RNA methylation in Arabidopsis thaliana.</title>
        <authorList>
            <person name="Barneche F."/>
            <person name="Steinmetz F."/>
            <person name="Echeverria M."/>
        </authorList>
    </citation>
    <scope>NUCLEOTIDE SEQUENCE [GENOMIC DNA / MRNA]</scope>
    <scope>FUNCTION</scope>
    <scope>CATALYTIC ACTIVITY</scope>
    <scope>TISSUE SPECIFICITY</scope>
    <source>
        <strain>cv. Columbia</strain>
    </source>
</reference>
<reference key="2">
    <citation type="journal article" date="1999" name="Nature">
        <title>Sequence and analysis of chromosome 4 of the plant Arabidopsis thaliana.</title>
        <authorList>
            <person name="Mayer K.F.X."/>
            <person name="Schueller C."/>
            <person name="Wambutt R."/>
            <person name="Murphy G."/>
            <person name="Volckaert G."/>
            <person name="Pohl T."/>
            <person name="Duesterhoeft A."/>
            <person name="Stiekema W."/>
            <person name="Entian K.-D."/>
            <person name="Terryn N."/>
            <person name="Harris B."/>
            <person name="Ansorge W."/>
            <person name="Brandt P."/>
            <person name="Grivell L.A."/>
            <person name="Rieger M."/>
            <person name="Weichselgartner M."/>
            <person name="de Simone V."/>
            <person name="Obermaier B."/>
            <person name="Mache R."/>
            <person name="Mueller M."/>
            <person name="Kreis M."/>
            <person name="Delseny M."/>
            <person name="Puigdomenech P."/>
            <person name="Watson M."/>
            <person name="Schmidtheini T."/>
            <person name="Reichert B."/>
            <person name="Portetelle D."/>
            <person name="Perez-Alonso M."/>
            <person name="Boutry M."/>
            <person name="Bancroft I."/>
            <person name="Vos P."/>
            <person name="Hoheisel J."/>
            <person name="Zimmermann W."/>
            <person name="Wedler H."/>
            <person name="Ridley P."/>
            <person name="Langham S.-A."/>
            <person name="McCullagh B."/>
            <person name="Bilham L."/>
            <person name="Robben J."/>
            <person name="van der Schueren J."/>
            <person name="Grymonprez B."/>
            <person name="Chuang Y.-J."/>
            <person name="Vandenbussche F."/>
            <person name="Braeken M."/>
            <person name="Weltjens I."/>
            <person name="Voet M."/>
            <person name="Bastiaens I."/>
            <person name="Aert R."/>
            <person name="Defoor E."/>
            <person name="Weitzenegger T."/>
            <person name="Bothe G."/>
            <person name="Ramsperger U."/>
            <person name="Hilbert H."/>
            <person name="Braun M."/>
            <person name="Holzer E."/>
            <person name="Brandt A."/>
            <person name="Peters S."/>
            <person name="van Staveren M."/>
            <person name="Dirkse W."/>
            <person name="Mooijman P."/>
            <person name="Klein Lankhorst R."/>
            <person name="Rose M."/>
            <person name="Hauf J."/>
            <person name="Koetter P."/>
            <person name="Berneiser S."/>
            <person name="Hempel S."/>
            <person name="Feldpausch M."/>
            <person name="Lamberth S."/>
            <person name="Van den Daele H."/>
            <person name="De Keyser A."/>
            <person name="Buysshaert C."/>
            <person name="Gielen J."/>
            <person name="Villarroel R."/>
            <person name="De Clercq R."/>
            <person name="van Montagu M."/>
            <person name="Rogers J."/>
            <person name="Cronin A."/>
            <person name="Quail M.A."/>
            <person name="Bray-Allen S."/>
            <person name="Clark L."/>
            <person name="Doggett J."/>
            <person name="Hall S."/>
            <person name="Kay M."/>
            <person name="Lennard N."/>
            <person name="McLay K."/>
            <person name="Mayes R."/>
            <person name="Pettett A."/>
            <person name="Rajandream M.A."/>
            <person name="Lyne M."/>
            <person name="Benes V."/>
            <person name="Rechmann S."/>
            <person name="Borkova D."/>
            <person name="Bloecker H."/>
            <person name="Scharfe M."/>
            <person name="Grimm M."/>
            <person name="Loehnert T.-H."/>
            <person name="Dose S."/>
            <person name="de Haan M."/>
            <person name="Maarse A.C."/>
            <person name="Schaefer M."/>
            <person name="Mueller-Auer S."/>
            <person name="Gabel C."/>
            <person name="Fuchs M."/>
            <person name="Fartmann B."/>
            <person name="Granderath K."/>
            <person name="Dauner D."/>
            <person name="Herzl A."/>
            <person name="Neumann S."/>
            <person name="Argiriou A."/>
            <person name="Vitale D."/>
            <person name="Liguori R."/>
            <person name="Piravandi E."/>
            <person name="Massenet O."/>
            <person name="Quigley F."/>
            <person name="Clabauld G."/>
            <person name="Muendlein A."/>
            <person name="Felber R."/>
            <person name="Schnabl S."/>
            <person name="Hiller R."/>
            <person name="Schmidt W."/>
            <person name="Lecharny A."/>
            <person name="Aubourg S."/>
            <person name="Chefdor F."/>
            <person name="Cooke R."/>
            <person name="Berger C."/>
            <person name="Monfort A."/>
            <person name="Casacuberta E."/>
            <person name="Gibbons T."/>
            <person name="Weber N."/>
            <person name="Vandenbol M."/>
            <person name="Bargues M."/>
            <person name="Terol J."/>
            <person name="Torres A."/>
            <person name="Perez-Perez A."/>
            <person name="Purnelle B."/>
            <person name="Bent E."/>
            <person name="Johnson S."/>
            <person name="Tacon D."/>
            <person name="Jesse T."/>
            <person name="Heijnen L."/>
            <person name="Schwarz S."/>
            <person name="Scholler P."/>
            <person name="Heber S."/>
            <person name="Francs P."/>
            <person name="Bielke C."/>
            <person name="Frishman D."/>
            <person name="Haase D."/>
            <person name="Lemcke K."/>
            <person name="Mewes H.-W."/>
            <person name="Stocker S."/>
            <person name="Zaccaria P."/>
            <person name="Bevan M."/>
            <person name="Wilson R.K."/>
            <person name="de la Bastide M."/>
            <person name="Habermann K."/>
            <person name="Parnell L."/>
            <person name="Dedhia N."/>
            <person name="Gnoj L."/>
            <person name="Schutz K."/>
            <person name="Huang E."/>
            <person name="Spiegel L."/>
            <person name="Sekhon M."/>
            <person name="Murray J."/>
            <person name="Sheet P."/>
            <person name="Cordes M."/>
            <person name="Abu-Threideh J."/>
            <person name="Stoneking T."/>
            <person name="Kalicki J."/>
            <person name="Graves T."/>
            <person name="Harmon G."/>
            <person name="Edwards J."/>
            <person name="Latreille P."/>
            <person name="Courtney L."/>
            <person name="Cloud J."/>
            <person name="Abbott A."/>
            <person name="Scott K."/>
            <person name="Johnson D."/>
            <person name="Minx P."/>
            <person name="Bentley D."/>
            <person name="Fulton B."/>
            <person name="Miller N."/>
            <person name="Greco T."/>
            <person name="Kemp K."/>
            <person name="Kramer J."/>
            <person name="Fulton L."/>
            <person name="Mardis E."/>
            <person name="Dante M."/>
            <person name="Pepin K."/>
            <person name="Hillier L.W."/>
            <person name="Nelson J."/>
            <person name="Spieth J."/>
            <person name="Ryan E."/>
            <person name="Andrews S."/>
            <person name="Geisel C."/>
            <person name="Layman D."/>
            <person name="Du H."/>
            <person name="Ali J."/>
            <person name="Berghoff A."/>
            <person name="Jones K."/>
            <person name="Drone K."/>
            <person name="Cotton M."/>
            <person name="Joshu C."/>
            <person name="Antonoiu B."/>
            <person name="Zidanic M."/>
            <person name="Strong C."/>
            <person name="Sun H."/>
            <person name="Lamar B."/>
            <person name="Yordan C."/>
            <person name="Ma P."/>
            <person name="Zhong J."/>
            <person name="Preston R."/>
            <person name="Vil D."/>
            <person name="Shekher M."/>
            <person name="Matero A."/>
            <person name="Shah R."/>
            <person name="Swaby I.K."/>
            <person name="O'Shaughnessy A."/>
            <person name="Rodriguez M."/>
            <person name="Hoffman J."/>
            <person name="Till S."/>
            <person name="Granat S."/>
            <person name="Shohdy N."/>
            <person name="Hasegawa A."/>
            <person name="Hameed A."/>
            <person name="Lodhi M."/>
            <person name="Johnson A."/>
            <person name="Chen E."/>
            <person name="Marra M.A."/>
            <person name="Martienssen R."/>
            <person name="McCombie W.R."/>
        </authorList>
    </citation>
    <scope>NUCLEOTIDE SEQUENCE [LARGE SCALE GENOMIC DNA]</scope>
    <source>
        <strain>cv. Columbia</strain>
    </source>
</reference>
<reference key="3">
    <citation type="journal article" date="2017" name="Plant J.">
        <title>Araport11: a complete reannotation of the Arabidopsis thaliana reference genome.</title>
        <authorList>
            <person name="Cheng C.Y."/>
            <person name="Krishnakumar V."/>
            <person name="Chan A.P."/>
            <person name="Thibaud-Nissen F."/>
            <person name="Schobel S."/>
            <person name="Town C.D."/>
        </authorList>
    </citation>
    <scope>GENOME REANNOTATION</scope>
    <source>
        <strain>cv. Columbia</strain>
    </source>
</reference>
<reference key="4">
    <citation type="journal article" date="2003" name="Science">
        <title>Empirical analysis of transcriptional activity in the Arabidopsis genome.</title>
        <authorList>
            <person name="Yamada K."/>
            <person name="Lim J."/>
            <person name="Dale J.M."/>
            <person name="Chen H."/>
            <person name="Shinn P."/>
            <person name="Palm C.J."/>
            <person name="Southwick A.M."/>
            <person name="Wu H.C."/>
            <person name="Kim C.J."/>
            <person name="Nguyen M."/>
            <person name="Pham P.K."/>
            <person name="Cheuk R.F."/>
            <person name="Karlin-Newmann G."/>
            <person name="Liu S.X."/>
            <person name="Lam B."/>
            <person name="Sakano H."/>
            <person name="Wu T."/>
            <person name="Yu G."/>
            <person name="Miranda M."/>
            <person name="Quach H.L."/>
            <person name="Tripp M."/>
            <person name="Chang C.H."/>
            <person name="Lee J.M."/>
            <person name="Toriumi M.J."/>
            <person name="Chan M.M."/>
            <person name="Tang C.C."/>
            <person name="Onodera C.S."/>
            <person name="Deng J.M."/>
            <person name="Akiyama K."/>
            <person name="Ansari Y."/>
            <person name="Arakawa T."/>
            <person name="Banh J."/>
            <person name="Banno F."/>
            <person name="Bowser L."/>
            <person name="Brooks S.Y."/>
            <person name="Carninci P."/>
            <person name="Chao Q."/>
            <person name="Choy N."/>
            <person name="Enju A."/>
            <person name="Goldsmith A.D."/>
            <person name="Gurjal M."/>
            <person name="Hansen N.F."/>
            <person name="Hayashizaki Y."/>
            <person name="Johnson-Hopson C."/>
            <person name="Hsuan V.W."/>
            <person name="Iida K."/>
            <person name="Karnes M."/>
            <person name="Khan S."/>
            <person name="Koesema E."/>
            <person name="Ishida J."/>
            <person name="Jiang P.X."/>
            <person name="Jones T."/>
            <person name="Kawai J."/>
            <person name="Kamiya A."/>
            <person name="Meyers C."/>
            <person name="Nakajima M."/>
            <person name="Narusaka M."/>
            <person name="Seki M."/>
            <person name="Sakurai T."/>
            <person name="Satou M."/>
            <person name="Tamse R."/>
            <person name="Vaysberg M."/>
            <person name="Wallender E.K."/>
            <person name="Wong C."/>
            <person name="Yamamura Y."/>
            <person name="Yuan S."/>
            <person name="Shinozaki K."/>
            <person name="Davis R.W."/>
            <person name="Theologis A."/>
            <person name="Ecker J.R."/>
        </authorList>
    </citation>
    <scope>NUCLEOTIDE SEQUENCE [LARGE SCALE MRNA]</scope>
    <source>
        <strain>cv. Columbia</strain>
    </source>
</reference>
<reference key="5">
    <citation type="submission" date="2002-03" db="EMBL/GenBank/DDBJ databases">
        <title>Full-length cDNA from Arabidopsis thaliana.</title>
        <authorList>
            <person name="Brover V.V."/>
            <person name="Troukhan M.E."/>
            <person name="Alexandrov N.A."/>
            <person name="Lu Y.-P."/>
            <person name="Flavell R.B."/>
            <person name="Feldmann K.A."/>
        </authorList>
    </citation>
    <scope>NUCLEOTIDE SEQUENCE [LARGE SCALE MRNA]</scope>
</reference>
<reference key="6">
    <citation type="journal article" date="2000" name="Plant Physiol.">
        <title>Molecular cloning and targeting of a fibrillarin homolog from Arabidopsis.</title>
        <authorList>
            <person name="Pih K.T."/>
            <person name="Yi M.J."/>
            <person name="Liang Y.S."/>
            <person name="Shin B.J."/>
            <person name="Cho M.J."/>
            <person name="Hwang I."/>
            <person name="Son D."/>
        </authorList>
    </citation>
    <scope>INDUCTION</scope>
    <scope>TISSUE SPECIFICITY</scope>
</reference>
<reference key="7">
    <citation type="journal article" date="2007" name="Biochem. J.">
        <title>Identification and characterization of two closely related histone H4 arginine 3 methyltransferases in Arabidopsis thaliana.</title>
        <authorList>
            <person name="Yan D."/>
            <person name="Zhang Y."/>
            <person name="Niu L."/>
            <person name="Yuan Y."/>
            <person name="Cao X."/>
        </authorList>
    </citation>
    <scope>INTERACTION WITH PRMT11 AND PRMT12</scope>
</reference>
<reference key="8">
    <citation type="journal article" date="2007" name="Mol. Cell">
        <title>Purification of a plant mediator from Arabidopsis thaliana identifies PFT1 as the Med25 subunit.</title>
        <authorList>
            <person name="Baeckstroem S."/>
            <person name="Elfving N."/>
            <person name="Nilsson R."/>
            <person name="Wingsle G."/>
            <person name="Bjoerklund S."/>
        </authorList>
    </citation>
    <scope>IDENTIFICATION BY MASS SPECTROMETRY</scope>
</reference>
<reference key="9">
    <citation type="journal article" date="2007" name="Proc. Natl. Acad. Sci. U.S.A.">
        <title>Interaction of a plant virus-encoded protein with the major nucleolar protein fibrillarin is required for systemic virus infection.</title>
        <authorList>
            <person name="Kim S.H."/>
            <person name="Macfarlane S."/>
            <person name="Kalinina N.O."/>
            <person name="Rakitina D.V."/>
            <person name="Ryabov E.V."/>
            <person name="Gillespie T."/>
            <person name="Haupt S."/>
            <person name="Brown J.W."/>
            <person name="Taliansky M."/>
        </authorList>
    </citation>
    <scope>INTERACTION WITH GROUNDNUT ROSETTE VIRUS LONG-DISTANCE MOVEMENT PROTEIN</scope>
</reference>
<reference key="10">
    <citation type="journal article" date="2008" name="Plant Physiol.">
        <title>Arabidopsis ribosomal proteins RPL23aA and RPL23aB are differentially targeted to the nucleolus and are disparately required for normal development.</title>
        <authorList>
            <person name="Degenhardt R.F."/>
            <person name="Bonham-Smith P.C."/>
        </authorList>
    </citation>
    <scope>SUBCELLULAR LOCATION</scope>
</reference>
<reference key="11">
    <citation type="journal article" date="2011" name="Nucleic Acids Res.">
        <title>Two RNA-binding sites in plant fibrillarin provide interactions with various RNA substrates.</title>
        <authorList>
            <person name="Rakitina D.V."/>
            <person name="Taliansky M."/>
            <person name="Brown J.W."/>
            <person name="Kalinina N.O."/>
        </authorList>
    </citation>
    <scope>FUNCTION</scope>
    <scope>INTERACTION WITH RNA</scope>
    <scope>MUTAGENESIS OF 180-GLY--PHE-187</scope>
</reference>
<reference key="12">
    <citation type="journal article" date="2011" name="Plant Physiol.">
        <title>The Mediator complex in plants: structure, phylogeny, and expression profiling of representative genes in a dicot (Arabidopsis) and a monocot (rice) during reproduction and abiotic stress.</title>
        <authorList>
            <person name="Mathur S."/>
            <person name="Vyas S."/>
            <person name="Kapoor S."/>
            <person name="Tyagi A.K."/>
        </authorList>
    </citation>
    <scope>NOMENCLATURE</scope>
</reference>
<reference key="13">
    <citation type="journal article" date="2012" name="Biochimie">
        <title>The extreme N-terminal domain of a hordeivirus TGB1 movement protein mediates its localization to the nucleolus and interaction with fibrillarin.</title>
        <authorList>
            <person name="Semashko M.A."/>
            <person name="Gonzalez I."/>
            <person name="Shaw J."/>
            <person name="Leonova O.G."/>
            <person name="Popenko V.I."/>
            <person name="Taliansky M.E."/>
            <person name="Canto T."/>
            <person name="Kalinina N.O."/>
        </authorList>
    </citation>
    <scope>INTERACTION WITH HORDEIVIRUS TGB1 MOVEMENT PROTEIN</scope>
</reference>
<reference key="14">
    <citation type="journal article" date="2017" name="Front. Plant Sci.">
        <title>Novel ribonuclease activity differs between fibrillarins from Arabidopsis thaliana.</title>
        <authorList>
            <person name="Rodriguez-Corona U."/>
            <person name="Pereira-Santana A."/>
            <person name="Sobol M."/>
            <person name="Rodriguez-Zapata L.C."/>
            <person name="Hozak P."/>
            <person name="Castano E."/>
        </authorList>
    </citation>
    <scope>FUNCTION</scope>
</reference>
<reference key="15">
    <citation type="journal article" date="2019" name="New Phytol.">
        <title>ELF18-INDUCED LONG NONCODING RNA 1 evicts fibrillarin from mediator subunit to enhance PATHOGENESIS-RELATED GENE 1 (PR1) expression.</title>
        <authorList>
            <person name="Seo J.S."/>
            <person name="Diloknawarit P."/>
            <person name="Park B.S."/>
            <person name="Chua N.H."/>
        </authorList>
    </citation>
    <scope>FUNCTION</scope>
    <scope>INTERACTION WITH MED19A AND THE LNCRNA ELENA1 (AT4G16355)</scope>
</reference>
<dbReference type="EC" id="2.1.1.-" evidence="21"/>
<dbReference type="EMBL" id="AF233444">
    <property type="protein sequence ID" value="AAG10104.1"/>
    <property type="molecule type" value="mRNA"/>
</dbReference>
<dbReference type="EMBL" id="AF267171">
    <property type="protein sequence ID" value="AAG10153.1"/>
    <property type="molecule type" value="Genomic_DNA"/>
</dbReference>
<dbReference type="EMBL" id="AL050400">
    <property type="protein sequence ID" value="CAB43694.1"/>
    <property type="molecule type" value="Genomic_DNA"/>
</dbReference>
<dbReference type="EMBL" id="AL161563">
    <property type="protein sequence ID" value="CAB81373.1"/>
    <property type="molecule type" value="Genomic_DNA"/>
</dbReference>
<dbReference type="EMBL" id="CP002687">
    <property type="protein sequence ID" value="AEE85085.1"/>
    <property type="molecule type" value="Genomic_DNA"/>
</dbReference>
<dbReference type="EMBL" id="AY046027">
    <property type="protein sequence ID" value="AAK76701.1"/>
    <property type="molecule type" value="mRNA"/>
</dbReference>
<dbReference type="EMBL" id="AY142647">
    <property type="protein sequence ID" value="AAN13105.1"/>
    <property type="molecule type" value="mRNA"/>
</dbReference>
<dbReference type="EMBL" id="AY084608">
    <property type="protein sequence ID" value="AAM61172.1"/>
    <property type="molecule type" value="mRNA"/>
</dbReference>
<dbReference type="PIR" id="T09555">
    <property type="entry name" value="T09555"/>
</dbReference>
<dbReference type="RefSeq" id="NP_567724.1">
    <property type="nucleotide sequence ID" value="NM_118695.4"/>
</dbReference>
<dbReference type="SMR" id="Q94AH9"/>
<dbReference type="BioGRID" id="13955">
    <property type="interactions" value="87"/>
</dbReference>
<dbReference type="DIP" id="DIP-39086N"/>
<dbReference type="FunCoup" id="Q94AH9">
    <property type="interactions" value="3185"/>
</dbReference>
<dbReference type="IntAct" id="Q94AH9">
    <property type="interactions" value="7"/>
</dbReference>
<dbReference type="STRING" id="3702.Q94AH9"/>
<dbReference type="SwissPalm" id="Q94AH9"/>
<dbReference type="PaxDb" id="3702-AT4G25630.1"/>
<dbReference type="ProteomicsDB" id="238247"/>
<dbReference type="EnsemblPlants" id="AT4G25630.1">
    <property type="protein sequence ID" value="AT4G25630.1"/>
    <property type="gene ID" value="AT4G25630"/>
</dbReference>
<dbReference type="GeneID" id="828668"/>
<dbReference type="Gramene" id="AT4G25630.1">
    <property type="protein sequence ID" value="AT4G25630.1"/>
    <property type="gene ID" value="AT4G25630"/>
</dbReference>
<dbReference type="KEGG" id="ath:AT4G25630"/>
<dbReference type="Araport" id="AT4G25630"/>
<dbReference type="TAIR" id="AT4G25630">
    <property type="gene designation" value="FIB2"/>
</dbReference>
<dbReference type="eggNOG" id="KOG1596">
    <property type="taxonomic scope" value="Eukaryota"/>
</dbReference>
<dbReference type="HOGENOM" id="CLU_059055_1_0_1"/>
<dbReference type="InParanoid" id="Q94AH9"/>
<dbReference type="OMA" id="WNPNKSK"/>
<dbReference type="OrthoDB" id="1859733at2759"/>
<dbReference type="PhylomeDB" id="Q94AH9"/>
<dbReference type="CD-CODE" id="4299E36E">
    <property type="entry name" value="Nucleolus"/>
</dbReference>
<dbReference type="PRO" id="PR:Q94AH9"/>
<dbReference type="Proteomes" id="UP000006548">
    <property type="component" value="Chromosome 4"/>
</dbReference>
<dbReference type="ExpressionAtlas" id="Q94AH9">
    <property type="expression patterns" value="baseline and differential"/>
</dbReference>
<dbReference type="GO" id="GO:0005829">
    <property type="term" value="C:cytosol"/>
    <property type="evidence" value="ECO:0007005"/>
    <property type="project" value="TAIR"/>
</dbReference>
<dbReference type="GO" id="GO:0016592">
    <property type="term" value="C:mediator complex"/>
    <property type="evidence" value="ECO:0000314"/>
    <property type="project" value="UniProtKB"/>
</dbReference>
<dbReference type="GO" id="GO:0005730">
    <property type="term" value="C:nucleolus"/>
    <property type="evidence" value="ECO:0000314"/>
    <property type="project" value="TAIR"/>
</dbReference>
<dbReference type="GO" id="GO:1990904">
    <property type="term" value="C:ribonucleoprotein complex"/>
    <property type="evidence" value="ECO:0007669"/>
    <property type="project" value="UniProtKB-KW"/>
</dbReference>
<dbReference type="GO" id="GO:0008168">
    <property type="term" value="F:methyltransferase activity"/>
    <property type="evidence" value="ECO:0007669"/>
    <property type="project" value="UniProtKB-KW"/>
</dbReference>
<dbReference type="GO" id="GO:0003729">
    <property type="term" value="F:mRNA binding"/>
    <property type="evidence" value="ECO:0000314"/>
    <property type="project" value="TAIR"/>
</dbReference>
<dbReference type="GO" id="GO:0003723">
    <property type="term" value="F:RNA binding"/>
    <property type="evidence" value="ECO:0000314"/>
    <property type="project" value="TAIR"/>
</dbReference>
<dbReference type="GO" id="GO:0004540">
    <property type="term" value="F:RNA nuclease activity"/>
    <property type="evidence" value="ECO:0000314"/>
    <property type="project" value="TAIR"/>
</dbReference>
<dbReference type="GO" id="GO:0030515">
    <property type="term" value="F:snoRNA binding"/>
    <property type="evidence" value="ECO:0000250"/>
    <property type="project" value="TAIR"/>
</dbReference>
<dbReference type="GO" id="GO:0006952">
    <property type="term" value="P:defense response"/>
    <property type="evidence" value="ECO:0007669"/>
    <property type="project" value="UniProtKB-KW"/>
</dbReference>
<dbReference type="GO" id="GO:0032259">
    <property type="term" value="P:methylation"/>
    <property type="evidence" value="ECO:0007669"/>
    <property type="project" value="UniProtKB-KW"/>
</dbReference>
<dbReference type="GO" id="GO:0006364">
    <property type="term" value="P:rRNA processing"/>
    <property type="evidence" value="ECO:0007669"/>
    <property type="project" value="UniProtKB-KW"/>
</dbReference>
<dbReference type="FunFam" id="3.30.200.20:FF:000056">
    <property type="entry name" value="Fibrillarin like 1"/>
    <property type="match status" value="1"/>
</dbReference>
<dbReference type="FunFam" id="3.40.50.150:FF:000001">
    <property type="entry name" value="Fibrillarin like 1"/>
    <property type="match status" value="1"/>
</dbReference>
<dbReference type="Gene3D" id="3.30.200.20">
    <property type="entry name" value="Phosphorylase Kinase, domain 1"/>
    <property type="match status" value="1"/>
</dbReference>
<dbReference type="Gene3D" id="3.40.50.150">
    <property type="entry name" value="Vaccinia Virus protein VP39"/>
    <property type="match status" value="1"/>
</dbReference>
<dbReference type="HAMAP" id="MF_00351">
    <property type="entry name" value="RNA_methyltransf_FlpA"/>
    <property type="match status" value="1"/>
</dbReference>
<dbReference type="InterPro" id="IPR000692">
    <property type="entry name" value="Fibrillarin"/>
</dbReference>
<dbReference type="InterPro" id="IPR029063">
    <property type="entry name" value="SAM-dependent_MTases_sf"/>
</dbReference>
<dbReference type="NCBIfam" id="NF003276">
    <property type="entry name" value="PRK04266.1-2"/>
    <property type="match status" value="1"/>
</dbReference>
<dbReference type="PANTHER" id="PTHR10335:SF0">
    <property type="entry name" value="RRNA 2'-O-METHYLTRANSFERASE FIBRILLARIN 1-RELATED"/>
    <property type="match status" value="1"/>
</dbReference>
<dbReference type="PANTHER" id="PTHR10335">
    <property type="entry name" value="RRNA 2-O-METHYLTRANSFERASE FIBRILLARIN"/>
    <property type="match status" value="1"/>
</dbReference>
<dbReference type="Pfam" id="PF01269">
    <property type="entry name" value="Fibrillarin"/>
    <property type="match status" value="1"/>
</dbReference>
<dbReference type="PIRSF" id="PIRSF006540">
    <property type="entry name" value="Nop17p"/>
    <property type="match status" value="1"/>
</dbReference>
<dbReference type="PRINTS" id="PR00052">
    <property type="entry name" value="FIBRILLARIN"/>
</dbReference>
<dbReference type="SMART" id="SM01206">
    <property type="entry name" value="Fibrillarin"/>
    <property type="match status" value="1"/>
</dbReference>
<dbReference type="SUPFAM" id="SSF53335">
    <property type="entry name" value="S-adenosyl-L-methionine-dependent methyltransferases"/>
    <property type="match status" value="1"/>
</dbReference>
<feature type="chain" id="PRO_0000148519" description="rRNA 2'-O-methyltransferase fibrillarin 2">
    <location>
        <begin position="1"/>
        <end position="320"/>
    </location>
</feature>
<feature type="region of interest" description="Disordered" evidence="6">
    <location>
        <begin position="1"/>
        <end position="79"/>
    </location>
</feature>
<feature type="compositionally biased region" description="Gly residues" evidence="6">
    <location>
        <begin position="7"/>
        <end position="44"/>
    </location>
</feature>
<feature type="compositionally biased region" description="Gly residues" evidence="6">
    <location>
        <begin position="57"/>
        <end position="76"/>
    </location>
</feature>
<feature type="binding site" evidence="5">
    <location>
        <begin position="167"/>
        <end position="168"/>
    </location>
    <ligand>
        <name>S-adenosyl-L-methionine</name>
        <dbReference type="ChEBI" id="CHEBI:59789"/>
    </ligand>
</feature>
<feature type="binding site" evidence="3">
    <location>
        <begin position="186"/>
        <end position="187"/>
    </location>
    <ligand>
        <name>S-adenosyl-L-methionine</name>
        <dbReference type="ChEBI" id="CHEBI:59789"/>
    </ligand>
</feature>
<feature type="binding site" evidence="3">
    <location>
        <begin position="211"/>
        <end position="212"/>
    </location>
    <ligand>
        <name>S-adenosyl-L-methionine</name>
        <dbReference type="ChEBI" id="CHEBI:59789"/>
    </ligand>
</feature>
<feature type="binding site" evidence="3">
    <location>
        <begin position="231"/>
        <end position="234"/>
    </location>
    <ligand>
        <name>S-adenosyl-L-methionine</name>
        <dbReference type="ChEBI" id="CHEBI:59789"/>
    </ligand>
</feature>
<feature type="mutagenesis site" description="No effect on RNA binding." evidence="13">
    <original>GCVYAVEF</original>
    <variation>AAAAAAAA</variation>
    <location>
        <begin position="180"/>
        <end position="187"/>
    </location>
</feature>
<feature type="sequence conflict" description="In Ref. 4; AAK76701." evidence="20" ref="4">
    <original>C</original>
    <variation>S</variation>
    <location>
        <position position="181"/>
    </location>
</feature>
<protein>
    <recommendedName>
        <fullName>rRNA 2'-O-methyltransferase fibrillarin 2</fullName>
        <shortName evidence="18">AtFib2</shortName>
        <ecNumber evidence="21">2.1.1.-</ecNumber>
    </recommendedName>
    <alternativeName>
        <fullName>Fibrillarin-like protein 2</fullName>
    </alternativeName>
    <alternativeName>
        <fullName>Histone-glutamine methyltransferase</fullName>
    </alternativeName>
</protein>
<keyword id="KW-0488">Methylation</keyword>
<keyword id="KW-0489">Methyltransferase</keyword>
<keyword id="KW-0539">Nucleus</keyword>
<keyword id="KW-0611">Plant defense</keyword>
<keyword id="KW-1185">Reference proteome</keyword>
<keyword id="KW-0687">Ribonucleoprotein</keyword>
<keyword id="KW-0694">RNA-binding</keyword>
<keyword id="KW-0698">rRNA processing</keyword>
<keyword id="KW-0949">S-adenosyl-L-methionine</keyword>
<keyword id="KW-0808">Transferase</keyword>
<gene>
    <name evidence="18" type="primary">FIB2</name>
    <name evidence="17" type="synonym">FLP</name>
    <name evidence="19" type="synonym">MED36_1</name>
    <name type="synonym">MED36A</name>
    <name evidence="22" type="ordered locus">At4g25630</name>
    <name evidence="23" type="ORF">L73G19.10</name>
</gene>
<comment type="function">
    <text evidence="2 15 16 21">S-adenosyl-L-methionine-dependent methyltransferase that has the ability to methylate both RNAs and proteins (Probable). Involved in pre-rRNA processing. Utilizes the methyl donor S-adenosyl-L-methionine to catalyze the site-specific 2'-hydroxyl methylation of ribose moieties in pre-ribosomal RNA (Probable). Site specificity is provided by a guide RNA that base pairs with the substrate (Probable). Methylation occurs at a characteristic distance from the sequence involved in base pairing with the guide RNA (Probable). Also acts as a protein methyltransferase by mediating methylation of 'Gln-105' of histone H2A (H2AQ105me), a modification that impairs binding of the FACT complex and is specifically present at 35S ribosomal DNA locus (By similarity). Acts as a negative regulator of expression of immune responsive genes, including pathogenesis-related gene 1 (PR1), and of resistance against bacterial pathogen (PubMed:30307032). Binds to MED19A, a positive regulator of PR1 expression, to repress the activator activity of MED19A (PubMed:30307032). In response to the bacterial pathogen-associated molecular pattern (PAMP) elf18, associates with the long non-coding RNA (lncRNA) ELENA1 (At4g16355), and releases its repression of MED19A (PubMed:30307032). Possesses ribonuclease activity toward rRNA in vitro (PubMed:29163603). Binds phosphoinositides, phospholipids and phosphatidic acid in vitro (PubMed:29163603).</text>
</comment>
<comment type="catalytic activity">
    <reaction evidence="21">
        <text>a ribonucleotide in rRNA + S-adenosyl-L-methionine = a 2'-O-methylribonucleotide in rRNA + S-adenosyl-L-homocysteine + H(+)</text>
        <dbReference type="Rhea" id="RHEA:48628"/>
        <dbReference type="Rhea" id="RHEA-COMP:12164"/>
        <dbReference type="Rhea" id="RHEA-COMP:12165"/>
        <dbReference type="ChEBI" id="CHEBI:15378"/>
        <dbReference type="ChEBI" id="CHEBI:57856"/>
        <dbReference type="ChEBI" id="CHEBI:59789"/>
        <dbReference type="ChEBI" id="CHEBI:90675"/>
        <dbReference type="ChEBI" id="CHEBI:90676"/>
    </reaction>
    <physiologicalReaction direction="left-to-right" evidence="21">
        <dbReference type="Rhea" id="RHEA:48629"/>
    </physiologicalReaction>
</comment>
<comment type="catalytic activity">
    <reaction evidence="2">
        <text>L-glutaminyl-[histone H2A] + S-adenosyl-L-methionine = N(5)-methyl-L-glutaminyl-[histone H2A] + S-adenosyl-L-homocysteine + H(+)</text>
        <dbReference type="Rhea" id="RHEA:50904"/>
        <dbReference type="Rhea" id="RHEA-COMP:12837"/>
        <dbReference type="Rhea" id="RHEA-COMP:12839"/>
        <dbReference type="ChEBI" id="CHEBI:15378"/>
        <dbReference type="ChEBI" id="CHEBI:30011"/>
        <dbReference type="ChEBI" id="CHEBI:57856"/>
        <dbReference type="ChEBI" id="CHEBI:59789"/>
        <dbReference type="ChEBI" id="CHEBI:61891"/>
    </reaction>
</comment>
<comment type="subunit">
    <text evidence="2 10 11 14 16">Component of box C/D small nucleolar ribonucleoprotein (snoRNP) particles (By similarity). Interacts with groundnut rosette virus long-distance movement protein; this interaction is required for virus long-distance movement protein transiting through host Cajal body and nucleolus, relocalization of fibrillarin to the cytoplasm, and in presence of viral RNA, leads to the formation of stable RNPs (PubMed:17576925). Interacts (via GAR domain) with the hordeivirus TGB1 movement protein (via the first 82 amino acid residues) (PubMed:22349738). Interacts with PRMT11 and PRMT12 (PubMed:17666011). Interacts with MED19A (PubMed:30307032).</text>
</comment>
<comment type="subcellular location">
    <subcellularLocation>
        <location evidence="12">Nucleus</location>
        <location evidence="12">Nucleolus</location>
    </subcellularLocation>
    <text evidence="20">Localizes to the fibrillar region of the nucleolus.</text>
</comment>
<comment type="tissue specificity">
    <text evidence="7 8">Expressed in roots and flowers (PubMed:10806224, PubMed:10829025). Expressed in leaves and stems (PubMed:10806224). Expression levels decrease during aging (PubMed:10806224).</text>
</comment>
<comment type="induction">
    <text evidence="7">Repressed by abscisic acid (ABA).</text>
</comment>
<comment type="domain">
    <text evidence="1 4">The N-terminal DMA/Gly-rich region (also called GAR domain) is rich in Gly and Arg and functions in nucleolar targeting (By similarity). The central (138-179) and C-terminal (225-281) part of the protein exhibit cooperative RNA-binding activities.</text>
</comment>
<comment type="PTM">
    <text>Methylated by PRMT11 and PRMT12.</text>
</comment>
<comment type="miscellaneous">
    <text evidence="9 20">Baeckstroem et al identified FIB2 in a Mediator complex pull-down assay and suggested that FIB2 could be a plant specific component of the Mediator complex (PubMed:17560376). However, no experimental evidence has been brought so far to confirm this hypothesis (Probable).</text>
</comment>
<comment type="similarity">
    <text evidence="20">Belongs to the methyltransferase superfamily. Fibrillarin family.</text>
</comment>
<evidence type="ECO:0000250" key="1"/>
<evidence type="ECO:0000250" key="2">
    <source>
        <dbReference type="UniProtKB" id="P15646"/>
    </source>
</evidence>
<evidence type="ECO:0000250" key="3">
    <source>
        <dbReference type="UniProtKB" id="P22087"/>
    </source>
</evidence>
<evidence type="ECO:0000250" key="4">
    <source>
        <dbReference type="UniProtKB" id="Q9FEF8"/>
    </source>
</evidence>
<evidence type="ECO:0000250" key="5">
    <source>
        <dbReference type="UniProtKB" id="Q9Y9U3"/>
    </source>
</evidence>
<evidence type="ECO:0000256" key="6">
    <source>
        <dbReference type="SAM" id="MobiDB-lite"/>
    </source>
</evidence>
<evidence type="ECO:0000269" key="7">
    <source>
    </source>
</evidence>
<evidence type="ECO:0000269" key="8">
    <source>
    </source>
</evidence>
<evidence type="ECO:0000269" key="9">
    <source>
    </source>
</evidence>
<evidence type="ECO:0000269" key="10">
    <source>
    </source>
</evidence>
<evidence type="ECO:0000269" key="11">
    <source>
    </source>
</evidence>
<evidence type="ECO:0000269" key="12">
    <source>
    </source>
</evidence>
<evidence type="ECO:0000269" key="13">
    <source>
    </source>
</evidence>
<evidence type="ECO:0000269" key="14">
    <source>
    </source>
</evidence>
<evidence type="ECO:0000269" key="15">
    <source>
    </source>
</evidence>
<evidence type="ECO:0000269" key="16">
    <source>
    </source>
</evidence>
<evidence type="ECO:0000303" key="17">
    <source>
    </source>
</evidence>
<evidence type="ECO:0000303" key="18">
    <source>
    </source>
</evidence>
<evidence type="ECO:0000303" key="19">
    <source>
    </source>
</evidence>
<evidence type="ECO:0000305" key="20"/>
<evidence type="ECO:0000305" key="21">
    <source>
    </source>
</evidence>
<evidence type="ECO:0000312" key="22">
    <source>
        <dbReference type="Araport" id="AT4G25630"/>
    </source>
</evidence>
<evidence type="ECO:0000312" key="23">
    <source>
        <dbReference type="EMBL" id="CAB43694.1"/>
    </source>
</evidence>
<name>FBRL2_ARATH</name>
<organism>
    <name type="scientific">Arabidopsis thaliana</name>
    <name type="common">Mouse-ear cress</name>
    <dbReference type="NCBI Taxonomy" id="3702"/>
    <lineage>
        <taxon>Eukaryota</taxon>
        <taxon>Viridiplantae</taxon>
        <taxon>Streptophyta</taxon>
        <taxon>Embryophyta</taxon>
        <taxon>Tracheophyta</taxon>
        <taxon>Spermatophyta</taxon>
        <taxon>Magnoliopsida</taxon>
        <taxon>eudicotyledons</taxon>
        <taxon>Gunneridae</taxon>
        <taxon>Pentapetalae</taxon>
        <taxon>rosids</taxon>
        <taxon>malvids</taxon>
        <taxon>Brassicales</taxon>
        <taxon>Brassicaceae</taxon>
        <taxon>Camelineae</taxon>
        <taxon>Arabidopsis</taxon>
    </lineage>
</organism>
<accession>Q94AH9</accession>
<accession>Q9SZZ1</accession>
<sequence length="320" mass="33653">MRPPLTGSGGGFSGGRGRGGYSGGRGDGGFSGGRGGGGRGGGRGFSDRGGRGRGRGPPRGGARGGRGPAGRGGMKGGSKVIVEPHRHAGVFIAKGKEDALVTKNLVPGEAVYNEKRISVQNEDGTKTEYRVWNPFRSKLAAAILGGVDNIWIKPGAKVLYLGAASGTTVSHVSDLVGPEGCVYAVEFSHRSGRDLVNMAKKRTNVIPIIEDARHPAKYRMLVGMVDVIFSDVAQPDQARILALNASYFLKSGGHFVISIKANCIDSTVPAEAVFQTEVKKLQQEQFKPAEQVTLEPFERDHACVVGGYRMPKKPKAATAA</sequence>